<sequence>MDKFRVQGPTKLQGEVTISGAKNAALPILFAALLAEEPVEIQNVPKLKDVDTSMKLLSQLGAKVERNGSVHIDARDVNVFCAPYDLVKTMRASIWALGPLVARFGQGQVSLPGGCTIGARPVDLHISGLEQLGATIKLEEGYVKASVDGRLKGAHIVMDKVSVGATVTIMCAATLAEGTTIIENAAREPEIVDTANFLITLGAKISGQGTDRIVIEGVERLGGGVYRVLPDRIETGTFLVAAAISRGKIICRNAQPDTLDAVLAKLRDAGADIEVGEDWISLDMHGKRPKAVNVRTAPHPAFPTDMQAQFTLLNLVAEGTGFITETVFENRFMHVPELSRMGAHAEIESNTVICHGVEKLSGAQVMATDLRASASLVLAGCIAEGTTVVDRIYHIDRGYERIEDKLRALGANIERVKGE</sequence>
<protein>
    <recommendedName>
        <fullName evidence="1">UDP-N-acetylglucosamine 1-carboxyvinyltransferase</fullName>
        <ecNumber evidence="1">2.5.1.7</ecNumber>
    </recommendedName>
    <alternativeName>
        <fullName evidence="1">Enoylpyruvate transferase</fullName>
    </alternativeName>
    <alternativeName>
        <fullName evidence="1">UDP-N-acetylglucosamine enolpyruvyl transferase</fullName>
        <shortName evidence="1">EPT</shortName>
    </alternativeName>
</protein>
<dbReference type="EC" id="2.5.1.7" evidence="1"/>
<dbReference type="EMBL" id="M92358">
    <property type="protein sequence ID" value="AAA24187.1"/>
    <property type="molecule type" value="Genomic_DNA"/>
</dbReference>
<dbReference type="EMBL" id="U18997">
    <property type="protein sequence ID" value="AAA57990.1"/>
    <property type="molecule type" value="Genomic_DNA"/>
</dbReference>
<dbReference type="EMBL" id="U00096">
    <property type="protein sequence ID" value="AAC76221.1"/>
    <property type="molecule type" value="Genomic_DNA"/>
</dbReference>
<dbReference type="EMBL" id="AP009048">
    <property type="protein sequence ID" value="BAE77233.1"/>
    <property type="molecule type" value="Genomic_DNA"/>
</dbReference>
<dbReference type="EMBL" id="AB028039">
    <property type="protein sequence ID" value="BAA78107.1"/>
    <property type="molecule type" value="Genomic_DNA"/>
</dbReference>
<dbReference type="PIR" id="A44917">
    <property type="entry name" value="A44917"/>
</dbReference>
<dbReference type="RefSeq" id="NP_417656.1">
    <property type="nucleotide sequence ID" value="NC_000913.3"/>
</dbReference>
<dbReference type="RefSeq" id="WP_000357259.1">
    <property type="nucleotide sequence ID" value="NZ_STEB01000012.1"/>
</dbReference>
<dbReference type="PDB" id="1A2N">
    <property type="method" value="X-ray"/>
    <property type="resolution" value="2.80 A"/>
    <property type="chains" value="A=1-419"/>
</dbReference>
<dbReference type="PDB" id="1UAE">
    <property type="method" value="X-ray"/>
    <property type="resolution" value="1.80 A"/>
    <property type="chains" value="A=1-419"/>
</dbReference>
<dbReference type="PDB" id="2Z2C">
    <property type="method" value="X-ray"/>
    <property type="resolution" value="2.05 A"/>
    <property type="chains" value="A/B/C/D=1-419"/>
</dbReference>
<dbReference type="PDB" id="3ISS">
    <property type="method" value="X-ray"/>
    <property type="resolution" value="2.50 A"/>
    <property type="chains" value="A/B/C/D/E/F/G/H/I/J/K/L=1-418"/>
</dbReference>
<dbReference type="PDB" id="3KQJ">
    <property type="method" value="X-ray"/>
    <property type="resolution" value="1.70 A"/>
    <property type="chains" value="A=1-419"/>
</dbReference>
<dbReference type="PDB" id="3KR6">
    <property type="method" value="X-ray"/>
    <property type="resolution" value="1.70 A"/>
    <property type="chains" value="A=1-419"/>
</dbReference>
<dbReference type="PDB" id="3SWD">
    <property type="method" value="X-ray"/>
    <property type="resolution" value="2.50 A"/>
    <property type="chains" value="A/B/C/D/E/F/G/H/I/J/K/L=1-418"/>
</dbReference>
<dbReference type="PDB" id="5VM7">
    <property type="method" value="EM"/>
    <property type="resolution" value="5.70 A"/>
    <property type="chains" value="B=1-419"/>
</dbReference>
<dbReference type="PDBsum" id="1A2N"/>
<dbReference type="PDBsum" id="1UAE"/>
<dbReference type="PDBsum" id="2Z2C"/>
<dbReference type="PDBsum" id="3ISS"/>
<dbReference type="PDBsum" id="3KQJ"/>
<dbReference type="PDBsum" id="3KR6"/>
<dbReference type="PDBsum" id="3SWD"/>
<dbReference type="PDBsum" id="5VM7"/>
<dbReference type="SMR" id="P0A749"/>
<dbReference type="BioGRID" id="4262438">
    <property type="interactions" value="648"/>
</dbReference>
<dbReference type="BioGRID" id="852016">
    <property type="interactions" value="3"/>
</dbReference>
<dbReference type="DIP" id="DIP-48060N"/>
<dbReference type="FunCoup" id="P0A749">
    <property type="interactions" value="592"/>
</dbReference>
<dbReference type="IntAct" id="P0A749">
    <property type="interactions" value="25"/>
</dbReference>
<dbReference type="STRING" id="511145.b3189"/>
<dbReference type="BindingDB" id="P0A749"/>
<dbReference type="ChEMBL" id="CHEMBL1984"/>
<dbReference type="DrugBank" id="DB02435">
    <property type="generic name" value="Aminomethylcyclohexane"/>
</dbReference>
<dbReference type="DrugBank" id="DB02995">
    <property type="generic name" value="Cyclohexylammonium Ion"/>
</dbReference>
<dbReference type="DrugBank" id="DB00828">
    <property type="generic name" value="Fosfomycin"/>
</dbReference>
<dbReference type="DrugBank" id="DB03397">
    <property type="generic name" value="Uridine-Diphosphate-N-Acetylglucosamine"/>
</dbReference>
<dbReference type="DrugCentral" id="P0A749"/>
<dbReference type="jPOST" id="P0A749"/>
<dbReference type="PaxDb" id="511145-b3189"/>
<dbReference type="EnsemblBacteria" id="AAC76221">
    <property type="protein sequence ID" value="AAC76221"/>
    <property type="gene ID" value="b3189"/>
</dbReference>
<dbReference type="GeneID" id="93778792"/>
<dbReference type="GeneID" id="947703"/>
<dbReference type="KEGG" id="ecj:JW3156"/>
<dbReference type="KEGG" id="eco:b3189"/>
<dbReference type="PATRIC" id="fig|1411691.4.peg.3542"/>
<dbReference type="EchoBASE" id="EB1333"/>
<dbReference type="eggNOG" id="COG0766">
    <property type="taxonomic scope" value="Bacteria"/>
</dbReference>
<dbReference type="HOGENOM" id="CLU_027387_0_0_6"/>
<dbReference type="InParanoid" id="P0A749"/>
<dbReference type="OMA" id="MIEIGSW"/>
<dbReference type="PhylomeDB" id="P0A749"/>
<dbReference type="BioCyc" id="EcoCyc:UDPNACETYLGLUCOSAMENOLPYRTRANS-MONOMER"/>
<dbReference type="BioCyc" id="MetaCyc:UDPNACETYLGLUCOSAMENOLPYRTRANS-MONOMER"/>
<dbReference type="BRENDA" id="2.5.1.7">
    <property type="organism ID" value="2026"/>
</dbReference>
<dbReference type="SABIO-RK" id="P0A749"/>
<dbReference type="UniPathway" id="UPA00219"/>
<dbReference type="EvolutionaryTrace" id="P0A749"/>
<dbReference type="PRO" id="PR:P0A749"/>
<dbReference type="Proteomes" id="UP000000625">
    <property type="component" value="Chromosome"/>
</dbReference>
<dbReference type="GO" id="GO:0005829">
    <property type="term" value="C:cytosol"/>
    <property type="evidence" value="ECO:0000314"/>
    <property type="project" value="EcoCyc"/>
</dbReference>
<dbReference type="GO" id="GO:0008760">
    <property type="term" value="F:UDP-N-acetylglucosamine 1-carboxyvinyltransferase activity"/>
    <property type="evidence" value="ECO:0000314"/>
    <property type="project" value="EcoCyc"/>
</dbReference>
<dbReference type="GO" id="GO:0051301">
    <property type="term" value="P:cell division"/>
    <property type="evidence" value="ECO:0007669"/>
    <property type="project" value="UniProtKB-KW"/>
</dbReference>
<dbReference type="GO" id="GO:0071555">
    <property type="term" value="P:cell wall organization"/>
    <property type="evidence" value="ECO:0007669"/>
    <property type="project" value="UniProtKB-KW"/>
</dbReference>
<dbReference type="GO" id="GO:0009252">
    <property type="term" value="P:peptidoglycan biosynthetic process"/>
    <property type="evidence" value="ECO:0000315"/>
    <property type="project" value="EcoCyc"/>
</dbReference>
<dbReference type="GO" id="GO:0008360">
    <property type="term" value="P:regulation of cell shape"/>
    <property type="evidence" value="ECO:0007669"/>
    <property type="project" value="UniProtKB-KW"/>
</dbReference>
<dbReference type="GO" id="GO:0019277">
    <property type="term" value="P:UDP-N-acetylgalactosamine biosynthetic process"/>
    <property type="evidence" value="ECO:0007669"/>
    <property type="project" value="InterPro"/>
</dbReference>
<dbReference type="CDD" id="cd01555">
    <property type="entry name" value="UdpNAET"/>
    <property type="match status" value="1"/>
</dbReference>
<dbReference type="FunFam" id="3.65.10.10:FF:000002">
    <property type="entry name" value="UDP-N-acetylglucosamine 1-carboxyvinyltransferase"/>
    <property type="match status" value="1"/>
</dbReference>
<dbReference type="Gene3D" id="3.65.10.10">
    <property type="entry name" value="Enolpyruvate transferase domain"/>
    <property type="match status" value="2"/>
</dbReference>
<dbReference type="HAMAP" id="MF_00111">
    <property type="entry name" value="MurA"/>
    <property type="match status" value="1"/>
</dbReference>
<dbReference type="InterPro" id="IPR001986">
    <property type="entry name" value="Enolpyruvate_Tfrase_dom"/>
</dbReference>
<dbReference type="InterPro" id="IPR036968">
    <property type="entry name" value="Enolpyruvate_Tfrase_sf"/>
</dbReference>
<dbReference type="InterPro" id="IPR050068">
    <property type="entry name" value="MurA_subfamily"/>
</dbReference>
<dbReference type="InterPro" id="IPR013792">
    <property type="entry name" value="RNA3'P_cycl/enolpyr_Trfase_a/b"/>
</dbReference>
<dbReference type="InterPro" id="IPR005750">
    <property type="entry name" value="UDP_GlcNAc_COvinyl_MurA"/>
</dbReference>
<dbReference type="NCBIfam" id="TIGR01072">
    <property type="entry name" value="murA"/>
    <property type="match status" value="1"/>
</dbReference>
<dbReference type="NCBIfam" id="NF006873">
    <property type="entry name" value="PRK09369.1"/>
    <property type="match status" value="1"/>
</dbReference>
<dbReference type="PANTHER" id="PTHR43783">
    <property type="entry name" value="UDP-N-ACETYLGLUCOSAMINE 1-CARBOXYVINYLTRANSFERASE"/>
    <property type="match status" value="1"/>
</dbReference>
<dbReference type="PANTHER" id="PTHR43783:SF1">
    <property type="entry name" value="UDP-N-ACETYLGLUCOSAMINE 1-CARBOXYVINYLTRANSFERASE"/>
    <property type="match status" value="1"/>
</dbReference>
<dbReference type="Pfam" id="PF00275">
    <property type="entry name" value="EPSP_synthase"/>
    <property type="match status" value="1"/>
</dbReference>
<dbReference type="SUPFAM" id="SSF55205">
    <property type="entry name" value="EPT/RTPC-like"/>
    <property type="match status" value="1"/>
</dbReference>
<comment type="function">
    <text evidence="2 3">Cell wall formation (PubMed:1512209). Adds enolpyruvyl to UDP-N-acetylglucosamine (PubMed:1512209, PubMed:20392080). Target for the antibiotic fosfomycin.</text>
</comment>
<comment type="catalytic activity">
    <reaction evidence="1 2 3">
        <text>phosphoenolpyruvate + UDP-N-acetyl-alpha-D-glucosamine = UDP-N-acetyl-3-O-(1-carboxyvinyl)-alpha-D-glucosamine + phosphate</text>
        <dbReference type="Rhea" id="RHEA:18681"/>
        <dbReference type="ChEBI" id="CHEBI:43474"/>
        <dbReference type="ChEBI" id="CHEBI:57705"/>
        <dbReference type="ChEBI" id="CHEBI:58702"/>
        <dbReference type="ChEBI" id="CHEBI:68483"/>
        <dbReference type="EC" id="2.5.1.7"/>
    </reaction>
</comment>
<comment type="activity regulation">
    <text evidence="3 4">Competitively inhibited by UDP-N-acetylglucosamine 3'-phosphate, with a Ki of 7 uM (PubMed:21445328). In vitro inhibited by covalent binding of fosfomycin and the fungal product terreic acid in the presence of substrate UDP-N-acetylglucosamine, with an inactivation rate constant of 102 M(-1)sec(-1) for terreic acid (PubMed:20392080).</text>
</comment>
<comment type="biophysicochemical properties">
    <kinetics>
        <KM evidence="4">15 uM for UDP-N-acetylglucosamine</KM>
    </kinetics>
</comment>
<comment type="pathway">
    <text evidence="1 2">Cell wall biogenesis; peptidoglycan biosynthesis.</text>
</comment>
<comment type="subcellular location">
    <subcellularLocation>
        <location evidence="1 7">Cytoplasm</location>
    </subcellularLocation>
</comment>
<comment type="similarity">
    <text evidence="1">Belongs to the EPSP synthase family. MurA subfamily.</text>
</comment>
<organism>
    <name type="scientific">Escherichia coli (strain K12)</name>
    <dbReference type="NCBI Taxonomy" id="83333"/>
    <lineage>
        <taxon>Bacteria</taxon>
        <taxon>Pseudomonadati</taxon>
        <taxon>Pseudomonadota</taxon>
        <taxon>Gammaproteobacteria</taxon>
        <taxon>Enterobacterales</taxon>
        <taxon>Enterobacteriaceae</taxon>
        <taxon>Escherichia</taxon>
    </lineage>
</organism>
<keyword id="KW-0002">3D-structure</keyword>
<keyword id="KW-0131">Cell cycle</keyword>
<keyword id="KW-0132">Cell division</keyword>
<keyword id="KW-0133">Cell shape</keyword>
<keyword id="KW-0961">Cell wall biogenesis/degradation</keyword>
<keyword id="KW-0963">Cytoplasm</keyword>
<keyword id="KW-0903">Direct protein sequencing</keyword>
<keyword id="KW-0573">Peptidoglycan synthesis</keyword>
<keyword id="KW-0670">Pyruvate</keyword>
<keyword id="KW-1185">Reference proteome</keyword>
<keyword id="KW-0808">Transferase</keyword>
<reference key="1">
    <citation type="journal article" date="1992" name="J. Bacteriol.">
        <title>Cloning and sequencing of Escherichia coli murZ and purification of its product, a UDP-N-acetylglucosamine enolpyruvyl transferase.</title>
        <authorList>
            <person name="Marquardt J.L."/>
            <person name="Siegele D.A."/>
            <person name="Kolter R."/>
            <person name="Walsh C.T."/>
        </authorList>
    </citation>
    <scope>NUCLEOTIDE SEQUENCE [GENOMIC DNA]</scope>
    <scope>PROTEIN SEQUENCE OF 1-10</scope>
    <scope>FUNCTION</scope>
    <scope>CATALYTIC ACTIVITY</scope>
    <scope>PATHWAY</scope>
    <source>
        <strain>K12 / AB1157</strain>
    </source>
</reference>
<reference key="2">
    <citation type="journal article" date="1999" name="Antimicrob. Agents Chemother.">
        <title>Emergence of fosfomycin-resistant isolates of Shiga-like toxin-producing Escherichia coli O26.</title>
        <authorList>
            <person name="Horii T."/>
            <person name="Kimura T."/>
            <person name="Sato K."/>
            <person name="Shibayama K."/>
            <person name="Ohta M."/>
        </authorList>
    </citation>
    <scope>NUCLEOTIDE SEQUENCE [GENOMIC DNA]</scope>
    <source>
        <strain>O26 / NGY47</strain>
    </source>
</reference>
<reference key="3">
    <citation type="journal article" date="1997" name="Science">
        <title>The complete genome sequence of Escherichia coli K-12.</title>
        <authorList>
            <person name="Blattner F.R."/>
            <person name="Plunkett G. III"/>
            <person name="Bloch C.A."/>
            <person name="Perna N.T."/>
            <person name="Burland V."/>
            <person name="Riley M."/>
            <person name="Collado-Vides J."/>
            <person name="Glasner J.D."/>
            <person name="Rode C.K."/>
            <person name="Mayhew G.F."/>
            <person name="Gregor J."/>
            <person name="Davis N.W."/>
            <person name="Kirkpatrick H.A."/>
            <person name="Goeden M.A."/>
            <person name="Rose D.J."/>
            <person name="Mau B."/>
            <person name="Shao Y."/>
        </authorList>
    </citation>
    <scope>NUCLEOTIDE SEQUENCE [LARGE SCALE GENOMIC DNA]</scope>
    <source>
        <strain>K12 / MG1655 / ATCC 47076</strain>
    </source>
</reference>
<reference key="4">
    <citation type="journal article" date="2006" name="Mol. Syst. Biol.">
        <title>Highly accurate genome sequences of Escherichia coli K-12 strains MG1655 and W3110.</title>
        <authorList>
            <person name="Hayashi K."/>
            <person name="Morooka N."/>
            <person name="Yamamoto Y."/>
            <person name="Fujita K."/>
            <person name="Isono K."/>
            <person name="Choi S."/>
            <person name="Ohtsubo E."/>
            <person name="Baba T."/>
            <person name="Wanner B.L."/>
            <person name="Mori H."/>
            <person name="Horiuchi T."/>
        </authorList>
    </citation>
    <scope>NUCLEOTIDE SEQUENCE [LARGE SCALE GENOMIC DNA]</scope>
    <source>
        <strain>K12 / W3110 / ATCC 27325 / DSM 5911</strain>
    </source>
</reference>
<reference key="5">
    <citation type="journal article" date="2011" name="PLoS Biol.">
        <title>A novel mechanism of programmed cell death in bacteria by toxin-antitoxin systems corrupts peptidoglycan synthesis.</title>
        <authorList>
            <person name="Mutschler H."/>
            <person name="Gebhardt M."/>
            <person name="Shoeman R.L."/>
            <person name="Meinhart A."/>
        </authorList>
    </citation>
    <scope>ACTIVITY REGULATION</scope>
    <scope>BIOPHYSICOCHEMICAL PROPERTIES</scope>
</reference>
<reference evidence="11" key="6">
    <citation type="journal article" date="1996" name="Structure">
        <title>Structure of UDP-N-acetylglucosamine enolpyruvyl transferase, an enzyme essential for the synthesis of bacterial peptidoglycan, complexed with substrate UDP-N-acetylglucosamine and the drug fosfomycin.</title>
        <authorList>
            <person name="Skarzynski T."/>
            <person name="Mistry A."/>
            <person name="Wonacott A."/>
            <person name="Hutchinson S.E."/>
            <person name="Kelly V.A."/>
            <person name="Duncan K."/>
        </authorList>
    </citation>
    <scope>X-RAY CRYSTALLOGRAPHY (1.8 ANGSTROMS) IN COMPLEX WITH UDP-N-ACETYLGLUCOSAMINE AND FOSFOMYCIN</scope>
    <scope>ACTIVE SITE</scope>
</reference>
<reference evidence="10" key="7">
    <citation type="journal article" date="1998" name="Biochemistry">
        <title>Stereochemical course of enzymatic enolpyruvyl transfer and catalytic conformation of the active site revealed by the crystal structure of the fluorinated analogue of the reaction tetrahedral intermediate bound to the active site of the C115A mutant of MurA.</title>
        <authorList>
            <person name="Skarzynski T."/>
            <person name="Kim D.H."/>
            <person name="Lees W.J."/>
            <person name="Walsh C.T."/>
            <person name="Duncan K."/>
        </authorList>
    </citation>
    <scope>X-RAY CRYSTALLOGRAPHY (2.8 ANGSTROMS) IN COMPLEX WITH FLUORINATED ANALOG OF THE REACTION TETRAHEDRAL INTERMEDIATE</scope>
</reference>
<reference evidence="12 13" key="8">
    <citation type="journal article" date="2010" name="Biochemistry">
        <title>The fungal product terreic acid is a covalent inhibitor of the bacterial cell wall biosynthetic enzyme UDP-N-acetylglucosamine 1-carboxyvinyltransferase (MurA).</title>
        <authorList>
            <person name="Han H."/>
            <person name="Yang Y."/>
            <person name="Olesen S.H."/>
            <person name="Becker A."/>
            <person name="Betzi S."/>
            <person name="Schoenbrunn E."/>
        </authorList>
    </citation>
    <scope>X-RAY CRYSTALLOGRAPHY (1.70 ANGSTROMS) IN COMPLEX WITH UDP-N-ACETYLGLUCOSAMINE AND FOSFOMYCIN</scope>
    <scope>FUNCTION</scope>
    <scope>CATALYTIC ACTIVITY</scope>
    <scope>ACTIVITY REGULATION</scope>
    <scope>ACTIVE SITE</scope>
</reference>
<reference evidence="14" key="9">
    <citation type="journal article" date="2012" name="J. Biol. Chem.">
        <title>Functional consequence of covalent reaction of phosphoenolpyruvate with UDP-N-acetylglucosamine 1-carboxyvinyltransferase (MurA).</title>
        <authorList>
            <person name="Zhu J.Y."/>
            <person name="Yang Y."/>
            <person name="Han H."/>
            <person name="Betzi S."/>
            <person name="Olesen S.H."/>
            <person name="Marsilio F."/>
            <person name="Schoenbrunn E."/>
        </authorList>
    </citation>
    <scope>X-RAY CRYSTALLOGRAPHY (2.50 ANGSTROMS) OF 1-418 IN COMPLEX WITH SUBSTRATE ANALOG</scope>
    <scope>ACTIVE SITE</scope>
    <scope>FORMATION OF COVALENT REACTION INTERMEDIATE</scope>
</reference>
<name>MURA_ECOLI</name>
<evidence type="ECO:0000255" key="1">
    <source>
        <dbReference type="HAMAP-Rule" id="MF_00111"/>
    </source>
</evidence>
<evidence type="ECO:0000269" key="2">
    <source>
    </source>
</evidence>
<evidence type="ECO:0000269" key="3">
    <source>
    </source>
</evidence>
<evidence type="ECO:0000269" key="4">
    <source>
    </source>
</evidence>
<evidence type="ECO:0000269" key="5">
    <source>
    </source>
</evidence>
<evidence type="ECO:0000269" key="6">
    <source>
    </source>
</evidence>
<evidence type="ECO:0000305" key="7"/>
<evidence type="ECO:0000305" key="8">
    <source>
    </source>
</evidence>
<evidence type="ECO:0000305" key="9">
    <source>
    </source>
</evidence>
<evidence type="ECO:0007744" key="10">
    <source>
        <dbReference type="PDB" id="1A2N"/>
    </source>
</evidence>
<evidence type="ECO:0007744" key="11">
    <source>
        <dbReference type="PDB" id="1UAE"/>
    </source>
</evidence>
<evidence type="ECO:0007744" key="12">
    <source>
        <dbReference type="PDB" id="3KQJ"/>
    </source>
</evidence>
<evidence type="ECO:0007744" key="13">
    <source>
        <dbReference type="PDB" id="3KR6"/>
    </source>
</evidence>
<evidence type="ECO:0007744" key="14">
    <source>
        <dbReference type="PDB" id="3SWD"/>
    </source>
</evidence>
<evidence type="ECO:0007829" key="15">
    <source>
        <dbReference type="PDB" id="2Z2C"/>
    </source>
</evidence>
<evidence type="ECO:0007829" key="16">
    <source>
        <dbReference type="PDB" id="3ISS"/>
    </source>
</evidence>
<evidence type="ECO:0007829" key="17">
    <source>
        <dbReference type="PDB" id="3KQJ"/>
    </source>
</evidence>
<evidence type="ECO:0007829" key="18">
    <source>
        <dbReference type="PDB" id="3SWD"/>
    </source>
</evidence>
<feature type="chain" id="PRO_0000178870" description="UDP-N-acetylglucosamine 1-carboxyvinyltransferase">
    <location>
        <begin position="1"/>
        <end position="419"/>
    </location>
</feature>
<feature type="active site" description="Proton donor" evidence="3 6 9 11 13">
    <location>
        <position position="115"/>
    </location>
</feature>
<feature type="binding site" evidence="8 9 13 14">
    <location>
        <begin position="22"/>
        <end position="23"/>
    </location>
    <ligand>
        <name>phosphoenolpyruvate</name>
        <dbReference type="ChEBI" id="CHEBI:58702"/>
    </ligand>
</feature>
<feature type="binding site" evidence="3 13">
    <location>
        <position position="91"/>
    </location>
    <ligand>
        <name>UDP-N-acetyl-alpha-D-glucosamine</name>
        <dbReference type="ChEBI" id="CHEBI:57705"/>
    </ligand>
</feature>
<feature type="binding site" evidence="3 5 13">
    <location>
        <begin position="120"/>
        <end position="124"/>
    </location>
    <ligand>
        <name>UDP-N-acetyl-alpha-D-glucosamine</name>
        <dbReference type="ChEBI" id="CHEBI:57705"/>
    </ligand>
</feature>
<feature type="binding site" evidence="3 5 13">
    <location>
        <begin position="160"/>
        <end position="163"/>
    </location>
    <ligand>
        <name>UDP-N-acetyl-alpha-D-glucosamine</name>
        <dbReference type="ChEBI" id="CHEBI:57705"/>
    </ligand>
</feature>
<feature type="binding site" evidence="3 5 13">
    <location>
        <position position="305"/>
    </location>
    <ligand>
        <name>UDP-N-acetyl-alpha-D-glucosamine</name>
        <dbReference type="ChEBI" id="CHEBI:57705"/>
    </ligand>
</feature>
<feature type="binding site" evidence="3 13">
    <location>
        <position position="327"/>
    </location>
    <ligand>
        <name>UDP-N-acetyl-alpha-D-glucosamine</name>
        <dbReference type="ChEBI" id="CHEBI:57705"/>
    </ligand>
</feature>
<feature type="modified residue" description="2-(S-cysteinyl)pyruvic acid O-phosphothioketal" evidence="9">
    <location>
        <position position="115"/>
    </location>
</feature>
<feature type="strand" evidence="17">
    <location>
        <begin position="3"/>
        <end position="8"/>
    </location>
</feature>
<feature type="strand" evidence="17">
    <location>
        <begin position="14"/>
        <end position="17"/>
    </location>
</feature>
<feature type="helix" evidence="17">
    <location>
        <begin position="22"/>
        <end position="31"/>
    </location>
</feature>
<feature type="helix" evidence="17">
    <location>
        <begin position="32"/>
        <end position="34"/>
    </location>
</feature>
<feature type="strand" evidence="17">
    <location>
        <begin position="35"/>
        <end position="37"/>
    </location>
</feature>
<feature type="strand" evidence="17">
    <location>
        <begin position="39"/>
        <end position="43"/>
    </location>
</feature>
<feature type="helix" evidence="17">
    <location>
        <begin position="48"/>
        <end position="59"/>
    </location>
</feature>
<feature type="strand" evidence="17">
    <location>
        <begin position="63"/>
        <end position="65"/>
    </location>
</feature>
<feature type="strand" evidence="17">
    <location>
        <begin position="70"/>
        <end position="73"/>
    </location>
</feature>
<feature type="helix" evidence="15">
    <location>
        <begin position="74"/>
        <end position="76"/>
    </location>
</feature>
<feature type="helix" evidence="17">
    <location>
        <begin position="84"/>
        <end position="87"/>
    </location>
</feature>
<feature type="helix" evidence="17">
    <location>
        <begin position="92"/>
        <end position="96"/>
    </location>
</feature>
<feature type="helix" evidence="17">
    <location>
        <begin position="97"/>
        <end position="104"/>
    </location>
</feature>
<feature type="strand" evidence="17">
    <location>
        <begin position="105"/>
        <end position="110"/>
    </location>
</feature>
<feature type="strand" evidence="18">
    <location>
        <begin position="115"/>
        <end position="118"/>
    </location>
</feature>
<feature type="helix" evidence="17">
    <location>
        <begin position="123"/>
        <end position="131"/>
    </location>
</feature>
<feature type="strand" evidence="17">
    <location>
        <begin position="135"/>
        <end position="139"/>
    </location>
</feature>
<feature type="strand" evidence="17">
    <location>
        <begin position="142"/>
        <end position="146"/>
    </location>
</feature>
<feature type="strand" evidence="15">
    <location>
        <begin position="148"/>
        <end position="150"/>
    </location>
</feature>
<feature type="strand" evidence="17">
    <location>
        <begin position="155"/>
        <end position="157"/>
    </location>
</feature>
<feature type="helix" evidence="17">
    <location>
        <begin position="163"/>
        <end position="173"/>
    </location>
</feature>
<feature type="strand" evidence="17">
    <location>
        <begin position="176"/>
        <end position="184"/>
    </location>
</feature>
<feature type="helix" evidence="17">
    <location>
        <begin position="189"/>
        <end position="200"/>
    </location>
</feature>
<feature type="strand" evidence="17">
    <location>
        <begin position="204"/>
        <end position="206"/>
    </location>
</feature>
<feature type="strand" evidence="17">
    <location>
        <begin position="210"/>
        <end position="216"/>
    </location>
</feature>
<feature type="strand" evidence="17">
    <location>
        <begin position="224"/>
        <end position="227"/>
    </location>
</feature>
<feature type="helix" evidence="17">
    <location>
        <begin position="232"/>
        <end position="245"/>
    </location>
</feature>
<feature type="strand" evidence="17">
    <location>
        <begin position="248"/>
        <end position="253"/>
    </location>
</feature>
<feature type="helix" evidence="17">
    <location>
        <begin position="256"/>
        <end position="258"/>
    </location>
</feature>
<feature type="helix" evidence="17">
    <location>
        <begin position="260"/>
        <end position="268"/>
    </location>
</feature>
<feature type="strand" evidence="17">
    <location>
        <begin position="272"/>
        <end position="275"/>
    </location>
</feature>
<feature type="strand" evidence="17">
    <location>
        <begin position="277"/>
        <end position="283"/>
    </location>
</feature>
<feature type="strand" evidence="15">
    <location>
        <begin position="293"/>
        <end position="295"/>
    </location>
</feature>
<feature type="helix" evidence="17">
    <location>
        <begin position="304"/>
        <end position="306"/>
    </location>
</feature>
<feature type="helix" evidence="17">
    <location>
        <begin position="307"/>
        <end position="316"/>
    </location>
</feature>
<feature type="strand" evidence="17">
    <location>
        <begin position="317"/>
        <end position="324"/>
    </location>
</feature>
<feature type="strand" evidence="16">
    <location>
        <begin position="326"/>
        <end position="328"/>
    </location>
</feature>
<feature type="turn" evidence="15">
    <location>
        <begin position="329"/>
        <end position="333"/>
    </location>
</feature>
<feature type="helix" evidence="17">
    <location>
        <begin position="334"/>
        <end position="339"/>
    </location>
</feature>
<feature type="turn" evidence="17">
    <location>
        <begin position="340"/>
        <end position="342"/>
    </location>
</feature>
<feature type="strand" evidence="17">
    <location>
        <begin position="344"/>
        <end position="348"/>
    </location>
</feature>
<feature type="strand" evidence="17">
    <location>
        <begin position="351"/>
        <end position="355"/>
    </location>
</feature>
<feature type="strand" evidence="17">
    <location>
        <begin position="364"/>
        <end position="366"/>
    </location>
</feature>
<feature type="helix" evidence="17">
    <location>
        <begin position="370"/>
        <end position="382"/>
    </location>
</feature>
<feature type="strand" evidence="17">
    <location>
        <begin position="383"/>
        <end position="390"/>
    </location>
</feature>
<feature type="helix" evidence="17">
    <location>
        <begin position="392"/>
        <end position="397"/>
    </location>
</feature>
<feature type="strand" evidence="16">
    <location>
        <begin position="399"/>
        <end position="401"/>
    </location>
</feature>
<feature type="helix" evidence="17">
    <location>
        <begin position="402"/>
        <end position="408"/>
    </location>
</feature>
<feature type="strand" evidence="17">
    <location>
        <begin position="412"/>
        <end position="417"/>
    </location>
</feature>
<proteinExistence type="evidence at protein level"/>
<gene>
    <name evidence="1" type="primary">murA</name>
    <name type="synonym">murZ</name>
    <name type="ordered locus">b3189</name>
    <name type="ordered locus">JW3156</name>
</gene>
<accession>P0A749</accession>
<accession>P28909</accession>
<accession>Q2M923</accession>